<name>CH60_SOLM1</name>
<protein>
    <recommendedName>
        <fullName evidence="1">Chaperonin GroEL</fullName>
        <ecNumber evidence="1">5.6.1.7</ecNumber>
    </recommendedName>
    <alternativeName>
        <fullName evidence="1">60 kDa chaperonin</fullName>
    </alternativeName>
    <alternativeName>
        <fullName evidence="1">Chaperonin-60</fullName>
        <shortName evidence="1">Cpn60</shortName>
    </alternativeName>
</protein>
<dbReference type="EC" id="5.6.1.7" evidence="1"/>
<dbReference type="EMBL" id="AP010904">
    <property type="protein sequence ID" value="BAH73762.1"/>
    <property type="molecule type" value="Genomic_DNA"/>
</dbReference>
<dbReference type="RefSeq" id="WP_006919071.1">
    <property type="nucleotide sequence ID" value="NC_012796.1"/>
</dbReference>
<dbReference type="SMR" id="C4XGI2"/>
<dbReference type="STRING" id="573370.DMR_02710"/>
<dbReference type="KEGG" id="dma:DMR_02710"/>
<dbReference type="eggNOG" id="COG0459">
    <property type="taxonomic scope" value="Bacteria"/>
</dbReference>
<dbReference type="HOGENOM" id="CLU_016503_3_0_7"/>
<dbReference type="OrthoDB" id="9766614at2"/>
<dbReference type="Proteomes" id="UP000009071">
    <property type="component" value="Chromosome"/>
</dbReference>
<dbReference type="GO" id="GO:0005737">
    <property type="term" value="C:cytoplasm"/>
    <property type="evidence" value="ECO:0007669"/>
    <property type="project" value="UniProtKB-SubCell"/>
</dbReference>
<dbReference type="GO" id="GO:0005524">
    <property type="term" value="F:ATP binding"/>
    <property type="evidence" value="ECO:0007669"/>
    <property type="project" value="UniProtKB-UniRule"/>
</dbReference>
<dbReference type="GO" id="GO:0140662">
    <property type="term" value="F:ATP-dependent protein folding chaperone"/>
    <property type="evidence" value="ECO:0007669"/>
    <property type="project" value="InterPro"/>
</dbReference>
<dbReference type="GO" id="GO:0016853">
    <property type="term" value="F:isomerase activity"/>
    <property type="evidence" value="ECO:0007669"/>
    <property type="project" value="UniProtKB-KW"/>
</dbReference>
<dbReference type="GO" id="GO:0051082">
    <property type="term" value="F:unfolded protein binding"/>
    <property type="evidence" value="ECO:0007669"/>
    <property type="project" value="UniProtKB-UniRule"/>
</dbReference>
<dbReference type="GO" id="GO:0042026">
    <property type="term" value="P:protein refolding"/>
    <property type="evidence" value="ECO:0007669"/>
    <property type="project" value="UniProtKB-UniRule"/>
</dbReference>
<dbReference type="CDD" id="cd03344">
    <property type="entry name" value="GroEL"/>
    <property type="match status" value="1"/>
</dbReference>
<dbReference type="FunFam" id="1.10.560.10:FF:000001">
    <property type="entry name" value="60 kDa chaperonin"/>
    <property type="match status" value="1"/>
</dbReference>
<dbReference type="FunFam" id="3.50.7.10:FF:000001">
    <property type="entry name" value="60 kDa chaperonin"/>
    <property type="match status" value="1"/>
</dbReference>
<dbReference type="Gene3D" id="3.50.7.10">
    <property type="entry name" value="GroEL"/>
    <property type="match status" value="1"/>
</dbReference>
<dbReference type="Gene3D" id="1.10.560.10">
    <property type="entry name" value="GroEL-like equatorial domain"/>
    <property type="match status" value="1"/>
</dbReference>
<dbReference type="Gene3D" id="3.30.260.10">
    <property type="entry name" value="TCP-1-like chaperonin intermediate domain"/>
    <property type="match status" value="1"/>
</dbReference>
<dbReference type="HAMAP" id="MF_00600">
    <property type="entry name" value="CH60"/>
    <property type="match status" value="1"/>
</dbReference>
<dbReference type="InterPro" id="IPR018370">
    <property type="entry name" value="Chaperonin_Cpn60_CS"/>
</dbReference>
<dbReference type="InterPro" id="IPR001844">
    <property type="entry name" value="Cpn60/GroEL"/>
</dbReference>
<dbReference type="InterPro" id="IPR002423">
    <property type="entry name" value="Cpn60/GroEL/TCP-1"/>
</dbReference>
<dbReference type="InterPro" id="IPR027409">
    <property type="entry name" value="GroEL-like_apical_dom_sf"/>
</dbReference>
<dbReference type="InterPro" id="IPR027413">
    <property type="entry name" value="GROEL-like_equatorial_sf"/>
</dbReference>
<dbReference type="InterPro" id="IPR027410">
    <property type="entry name" value="TCP-1-like_intermed_sf"/>
</dbReference>
<dbReference type="NCBIfam" id="TIGR02348">
    <property type="entry name" value="GroEL"/>
    <property type="match status" value="1"/>
</dbReference>
<dbReference type="NCBIfam" id="NF000592">
    <property type="entry name" value="PRK00013.1"/>
    <property type="match status" value="1"/>
</dbReference>
<dbReference type="NCBIfam" id="NF009487">
    <property type="entry name" value="PRK12849.1"/>
    <property type="match status" value="1"/>
</dbReference>
<dbReference type="NCBIfam" id="NF009488">
    <property type="entry name" value="PRK12850.1"/>
    <property type="match status" value="1"/>
</dbReference>
<dbReference type="NCBIfam" id="NF009489">
    <property type="entry name" value="PRK12851.1"/>
    <property type="match status" value="1"/>
</dbReference>
<dbReference type="PANTHER" id="PTHR45633">
    <property type="entry name" value="60 KDA HEAT SHOCK PROTEIN, MITOCHONDRIAL"/>
    <property type="match status" value="1"/>
</dbReference>
<dbReference type="Pfam" id="PF00118">
    <property type="entry name" value="Cpn60_TCP1"/>
    <property type="match status" value="1"/>
</dbReference>
<dbReference type="PRINTS" id="PR00298">
    <property type="entry name" value="CHAPERONIN60"/>
</dbReference>
<dbReference type="SUPFAM" id="SSF52029">
    <property type="entry name" value="GroEL apical domain-like"/>
    <property type="match status" value="1"/>
</dbReference>
<dbReference type="SUPFAM" id="SSF48592">
    <property type="entry name" value="GroEL equatorial domain-like"/>
    <property type="match status" value="1"/>
</dbReference>
<dbReference type="SUPFAM" id="SSF54849">
    <property type="entry name" value="GroEL-intermediate domain like"/>
    <property type="match status" value="1"/>
</dbReference>
<dbReference type="PROSITE" id="PS00296">
    <property type="entry name" value="CHAPERONINS_CPN60"/>
    <property type="match status" value="1"/>
</dbReference>
<keyword id="KW-0067">ATP-binding</keyword>
<keyword id="KW-0143">Chaperone</keyword>
<keyword id="KW-0963">Cytoplasm</keyword>
<keyword id="KW-0413">Isomerase</keyword>
<keyword id="KW-0547">Nucleotide-binding</keyword>
<evidence type="ECO:0000255" key="1">
    <source>
        <dbReference type="HAMAP-Rule" id="MF_00600"/>
    </source>
</evidence>
<evidence type="ECO:0000256" key="2">
    <source>
        <dbReference type="SAM" id="MobiDB-lite"/>
    </source>
</evidence>
<gene>
    <name evidence="1" type="primary">groEL</name>
    <name evidence="1" type="synonym">groL</name>
    <name type="ordered locus">DMR_02710</name>
</gene>
<reference key="1">
    <citation type="journal article" date="2009" name="Genome Res.">
        <title>Whole genome sequence of Desulfovibrio magneticus strain RS-1 revealed common gene clusters in magnetotactic bacteria.</title>
        <authorList>
            <person name="Nakazawa H."/>
            <person name="Arakaki A."/>
            <person name="Narita-Yamada S."/>
            <person name="Yashiro I."/>
            <person name="Jinno K."/>
            <person name="Aoki N."/>
            <person name="Tsuruyama A."/>
            <person name="Okamura Y."/>
            <person name="Tanikawa S."/>
            <person name="Fujita N."/>
            <person name="Takeyama H."/>
            <person name="Matsunaga T."/>
        </authorList>
    </citation>
    <scope>NUCLEOTIDE SEQUENCE [LARGE SCALE GENOMIC DNA]</scope>
    <source>
        <strain>ATCC 700980 / DSM 13731 / RS-1</strain>
    </source>
</reference>
<comment type="function">
    <text evidence="1">Together with its co-chaperonin GroES, plays an essential role in assisting protein folding. The GroEL-GroES system forms a nano-cage that allows encapsulation of the non-native substrate proteins and provides a physical environment optimized to promote and accelerate protein folding.</text>
</comment>
<comment type="catalytic activity">
    <reaction evidence="1">
        <text>ATP + H2O + a folded polypeptide = ADP + phosphate + an unfolded polypeptide.</text>
        <dbReference type="EC" id="5.6.1.7"/>
    </reaction>
</comment>
<comment type="subunit">
    <text evidence="1">Forms a cylinder of 14 subunits composed of two heptameric rings stacked back-to-back. Interacts with the co-chaperonin GroES.</text>
</comment>
<comment type="subcellular location">
    <subcellularLocation>
        <location evidence="1">Cytoplasm</location>
    </subcellularLocation>
</comment>
<comment type="similarity">
    <text evidence="1">Belongs to the chaperonin (HSP60) family.</text>
</comment>
<organism>
    <name type="scientific">Solidesulfovibrio magneticus (strain ATCC 700980 / DSM 13731 / RS-1)</name>
    <name type="common">Desulfovibrio magneticus</name>
    <dbReference type="NCBI Taxonomy" id="573370"/>
    <lineage>
        <taxon>Bacteria</taxon>
        <taxon>Pseudomonadati</taxon>
        <taxon>Thermodesulfobacteriota</taxon>
        <taxon>Desulfovibrionia</taxon>
        <taxon>Desulfovibrionales</taxon>
        <taxon>Desulfovibrionaceae</taxon>
        <taxon>Solidesulfovibrio</taxon>
    </lineage>
</organism>
<accession>C4XGI2</accession>
<feature type="chain" id="PRO_1000212194" description="Chaperonin GroEL">
    <location>
        <begin position="1"/>
        <end position="546"/>
    </location>
</feature>
<feature type="region of interest" description="Disordered" evidence="2">
    <location>
        <begin position="525"/>
        <end position="546"/>
    </location>
</feature>
<feature type="compositionally biased region" description="Gly residues" evidence="2">
    <location>
        <begin position="536"/>
        <end position="546"/>
    </location>
</feature>
<feature type="binding site" evidence="1">
    <location>
        <begin position="30"/>
        <end position="33"/>
    </location>
    <ligand>
        <name>ATP</name>
        <dbReference type="ChEBI" id="CHEBI:30616"/>
    </ligand>
</feature>
<feature type="binding site" evidence="1">
    <location>
        <position position="51"/>
    </location>
    <ligand>
        <name>ATP</name>
        <dbReference type="ChEBI" id="CHEBI:30616"/>
    </ligand>
</feature>
<feature type="binding site" evidence="1">
    <location>
        <begin position="87"/>
        <end position="91"/>
    </location>
    <ligand>
        <name>ATP</name>
        <dbReference type="ChEBI" id="CHEBI:30616"/>
    </ligand>
</feature>
<feature type="binding site" evidence="1">
    <location>
        <position position="415"/>
    </location>
    <ligand>
        <name>ATP</name>
        <dbReference type="ChEBI" id="CHEBI:30616"/>
    </ligand>
</feature>
<feature type="binding site" evidence="1">
    <location>
        <begin position="479"/>
        <end position="481"/>
    </location>
    <ligand>
        <name>ATP</name>
        <dbReference type="ChEBI" id="CHEBI:30616"/>
    </ligand>
</feature>
<feature type="binding site" evidence="1">
    <location>
        <position position="495"/>
    </location>
    <ligand>
        <name>ATP</name>
        <dbReference type="ChEBI" id="CHEBI:30616"/>
    </ligand>
</feature>
<proteinExistence type="inferred from homology"/>
<sequence>MAAKEILFDSKAREKLKRGVDKLANAVKVTLGPKGRNVVIEKSFGSPIITKDGVTVAKEIELEDKFENMGAQMVKEVASKTSDIAGDGTTTATILAQAIFTEGVKLVAAGRNPMAIKRGIDKAVASVVAELETLAKPTRDQKEIAQVGTISANSDATIGNIIAEAMNKVGKEGVITVEEAKGMETTLDVVEGMQFDRGYLSPYFITDPERMVCELDEPLILINEKKITAMKDLLPVLEQVAKMSRPLLIVAEDIEGEALATLVVNKLRGTLQVCAVKAPGFGDRRKAMLEDIATLTGGQCVSEDLGIKLENMTLADLGKAKRVIVDKENSTIVDGAGDGDKIKARVKQIRAQIEETTSSYDKEKLQERLAKIVGGVAVINVGAATETEMKEKKARVEDALNATRAAVEEGIVPGGGVALVRCVKSLTGIKAVDDDEQSGIEIVRRAIEEPLRQISGNAGFEGSIVVAKVRDGKDGFGFNAATGEYEDLIKAGVIDPKKVTRIALQNSSSVAGLLLTTEAAIAEKPEPKKDMPPMPGGGMGGMGGMY</sequence>